<evidence type="ECO:0000255" key="1">
    <source>
        <dbReference type="HAMAP-Rule" id="MF_00469"/>
    </source>
</evidence>
<feature type="chain" id="PRO_0000161517" description="tRNA uridine(34) hydroxylase">
    <location>
        <begin position="1"/>
        <end position="318"/>
    </location>
</feature>
<feature type="domain" description="Rhodanese" evidence="1">
    <location>
        <begin position="123"/>
        <end position="217"/>
    </location>
</feature>
<feature type="active site" description="Cysteine persulfide intermediate" evidence="1">
    <location>
        <position position="177"/>
    </location>
</feature>
<name>TRHO_STAAS</name>
<organism>
    <name type="scientific">Staphylococcus aureus (strain MSSA476)</name>
    <dbReference type="NCBI Taxonomy" id="282459"/>
    <lineage>
        <taxon>Bacteria</taxon>
        <taxon>Bacillati</taxon>
        <taxon>Bacillota</taxon>
        <taxon>Bacilli</taxon>
        <taxon>Bacillales</taxon>
        <taxon>Staphylococcaceae</taxon>
        <taxon>Staphylococcus</taxon>
    </lineage>
</organism>
<comment type="function">
    <text evidence="1">Catalyzes oxygen-dependent 5-hydroxyuridine (ho5U) modification at position 34 in tRNAs.</text>
</comment>
<comment type="catalytic activity">
    <reaction evidence="1">
        <text>uridine(34) in tRNA + AH2 + O2 = 5-hydroxyuridine(34) in tRNA + A + H2O</text>
        <dbReference type="Rhea" id="RHEA:64224"/>
        <dbReference type="Rhea" id="RHEA-COMP:11727"/>
        <dbReference type="Rhea" id="RHEA-COMP:13381"/>
        <dbReference type="ChEBI" id="CHEBI:13193"/>
        <dbReference type="ChEBI" id="CHEBI:15377"/>
        <dbReference type="ChEBI" id="CHEBI:15379"/>
        <dbReference type="ChEBI" id="CHEBI:17499"/>
        <dbReference type="ChEBI" id="CHEBI:65315"/>
        <dbReference type="ChEBI" id="CHEBI:136877"/>
    </reaction>
</comment>
<comment type="similarity">
    <text evidence="1">Belongs to the TrhO family.</text>
</comment>
<gene>
    <name evidence="1" type="primary">trhO</name>
    <name type="ordered locus">SAS2575</name>
</gene>
<protein>
    <recommendedName>
        <fullName evidence="1">tRNA uridine(34) hydroxylase</fullName>
        <ecNumber evidence="1">1.14.-.-</ecNumber>
    </recommendedName>
    <alternativeName>
        <fullName evidence="1">tRNA hydroxylation protein O</fullName>
    </alternativeName>
</protein>
<accession>Q6G5Y5</accession>
<keyword id="KW-0560">Oxidoreductase</keyword>
<keyword id="KW-0819">tRNA processing</keyword>
<proteinExistence type="inferred from homology"/>
<reference key="1">
    <citation type="journal article" date="2004" name="Proc. Natl. Acad. Sci. U.S.A.">
        <title>Complete genomes of two clinical Staphylococcus aureus strains: evidence for the rapid evolution of virulence and drug resistance.</title>
        <authorList>
            <person name="Holden M.T.G."/>
            <person name="Feil E.J."/>
            <person name="Lindsay J.A."/>
            <person name="Peacock S.J."/>
            <person name="Day N.P.J."/>
            <person name="Enright M.C."/>
            <person name="Foster T.J."/>
            <person name="Moore C.E."/>
            <person name="Hurst L."/>
            <person name="Atkin R."/>
            <person name="Barron A."/>
            <person name="Bason N."/>
            <person name="Bentley S.D."/>
            <person name="Chillingworth C."/>
            <person name="Chillingworth T."/>
            <person name="Churcher C."/>
            <person name="Clark L."/>
            <person name="Corton C."/>
            <person name="Cronin A."/>
            <person name="Doggett J."/>
            <person name="Dowd L."/>
            <person name="Feltwell T."/>
            <person name="Hance Z."/>
            <person name="Harris B."/>
            <person name="Hauser H."/>
            <person name="Holroyd S."/>
            <person name="Jagels K."/>
            <person name="James K.D."/>
            <person name="Lennard N."/>
            <person name="Line A."/>
            <person name="Mayes R."/>
            <person name="Moule S."/>
            <person name="Mungall K."/>
            <person name="Ormond D."/>
            <person name="Quail M.A."/>
            <person name="Rabbinowitsch E."/>
            <person name="Rutherford K.M."/>
            <person name="Sanders M."/>
            <person name="Sharp S."/>
            <person name="Simmonds M."/>
            <person name="Stevens K."/>
            <person name="Whitehead S."/>
            <person name="Barrell B.G."/>
            <person name="Spratt B.G."/>
            <person name="Parkhill J."/>
        </authorList>
    </citation>
    <scope>NUCLEOTIDE SEQUENCE [LARGE SCALE GENOMIC DNA]</scope>
    <source>
        <strain>MSSA476</strain>
    </source>
</reference>
<dbReference type="EC" id="1.14.-.-" evidence="1"/>
<dbReference type="EMBL" id="BX571857">
    <property type="protein sequence ID" value="CAG44392.1"/>
    <property type="molecule type" value="Genomic_DNA"/>
</dbReference>
<dbReference type="RefSeq" id="WP_001109285.1">
    <property type="nucleotide sequence ID" value="NC_002953.3"/>
</dbReference>
<dbReference type="SMR" id="Q6G5Y5"/>
<dbReference type="KEGG" id="sas:SAS2575"/>
<dbReference type="HOGENOM" id="CLU_038878_1_0_9"/>
<dbReference type="GO" id="GO:0016705">
    <property type="term" value="F:oxidoreductase activity, acting on paired donors, with incorporation or reduction of molecular oxygen"/>
    <property type="evidence" value="ECO:0007669"/>
    <property type="project" value="UniProtKB-UniRule"/>
</dbReference>
<dbReference type="GO" id="GO:0006400">
    <property type="term" value="P:tRNA modification"/>
    <property type="evidence" value="ECO:0007669"/>
    <property type="project" value="UniProtKB-UniRule"/>
</dbReference>
<dbReference type="CDD" id="cd01518">
    <property type="entry name" value="RHOD_YceA"/>
    <property type="match status" value="1"/>
</dbReference>
<dbReference type="Gene3D" id="3.30.70.100">
    <property type="match status" value="1"/>
</dbReference>
<dbReference type="Gene3D" id="3.40.250.10">
    <property type="entry name" value="Rhodanese-like domain"/>
    <property type="match status" value="1"/>
</dbReference>
<dbReference type="HAMAP" id="MF_00469">
    <property type="entry name" value="TrhO"/>
    <property type="match status" value="1"/>
</dbReference>
<dbReference type="InterPro" id="IPR001763">
    <property type="entry name" value="Rhodanese-like_dom"/>
</dbReference>
<dbReference type="InterPro" id="IPR036873">
    <property type="entry name" value="Rhodanese-like_dom_sf"/>
</dbReference>
<dbReference type="InterPro" id="IPR022111">
    <property type="entry name" value="Rhodanese_C"/>
</dbReference>
<dbReference type="InterPro" id="IPR020936">
    <property type="entry name" value="TrhO"/>
</dbReference>
<dbReference type="InterPro" id="IPR040503">
    <property type="entry name" value="TRHO_N"/>
</dbReference>
<dbReference type="NCBIfam" id="NF001135">
    <property type="entry name" value="PRK00142.1-3"/>
    <property type="match status" value="1"/>
</dbReference>
<dbReference type="PANTHER" id="PTHR43268:SF3">
    <property type="entry name" value="RHODANESE-LIKE DOMAIN-CONTAINING PROTEIN 7-RELATED"/>
    <property type="match status" value="1"/>
</dbReference>
<dbReference type="PANTHER" id="PTHR43268">
    <property type="entry name" value="THIOSULFATE SULFURTRANSFERASE/RHODANESE-LIKE DOMAIN-CONTAINING PROTEIN 2"/>
    <property type="match status" value="1"/>
</dbReference>
<dbReference type="Pfam" id="PF00581">
    <property type="entry name" value="Rhodanese"/>
    <property type="match status" value="1"/>
</dbReference>
<dbReference type="Pfam" id="PF12368">
    <property type="entry name" value="Rhodanese_C"/>
    <property type="match status" value="1"/>
</dbReference>
<dbReference type="Pfam" id="PF17773">
    <property type="entry name" value="UPF0176_N"/>
    <property type="match status" value="1"/>
</dbReference>
<dbReference type="SMART" id="SM00450">
    <property type="entry name" value="RHOD"/>
    <property type="match status" value="1"/>
</dbReference>
<dbReference type="SUPFAM" id="SSF52821">
    <property type="entry name" value="Rhodanese/Cell cycle control phosphatase"/>
    <property type="match status" value="1"/>
</dbReference>
<dbReference type="PROSITE" id="PS50206">
    <property type="entry name" value="RHODANESE_3"/>
    <property type="match status" value="1"/>
</dbReference>
<sequence>MNYQVLLYYKYTTIDDPEQFAQDHLAFCKAHHLKGRILVSTEGINGTLSGTKEETEQYMAHMHADERFKDMVFKIDEAEGHAFKKMHVRPRKEIVALDLEDDVDPRHTTGQYLSPVEFRKALEDDDTVIIDARNDYEFDLGHFRGAIRPNITRFRDLPDWIKENKALFADKKVVTYCTGGIRCEKFSGWLLKEGFEDVAQLHGGIATYGKDPETKGEYWDGKMYVFDDRISVNINQVEKTIIGKDWFDGKPCERYINCANPECNKQILVSEENETKYLGACSYECAKHERNRYVQANNISDNEWQQRLTNFDDLHQHA</sequence>